<comment type="catalytic activity">
    <reaction evidence="1">
        <text>L-histidinol phosphate + 2-oxoglutarate = 3-(imidazol-4-yl)-2-oxopropyl phosphate + L-glutamate</text>
        <dbReference type="Rhea" id="RHEA:23744"/>
        <dbReference type="ChEBI" id="CHEBI:16810"/>
        <dbReference type="ChEBI" id="CHEBI:29985"/>
        <dbReference type="ChEBI" id="CHEBI:57766"/>
        <dbReference type="ChEBI" id="CHEBI:57980"/>
        <dbReference type="EC" id="2.6.1.9"/>
    </reaction>
</comment>
<comment type="cofactor">
    <cofactor evidence="1">
        <name>pyridoxal 5'-phosphate</name>
        <dbReference type="ChEBI" id="CHEBI:597326"/>
    </cofactor>
</comment>
<comment type="pathway">
    <text evidence="1">Amino-acid biosynthesis; L-histidine biosynthesis; L-histidine from 5-phospho-alpha-D-ribose 1-diphosphate: step 7/9.</text>
</comment>
<comment type="subunit">
    <text evidence="1">Homodimer.</text>
</comment>
<comment type="similarity">
    <text evidence="1">Belongs to the class-II pyridoxal-phosphate-dependent aminotransferase family. Histidinol-phosphate aminotransferase subfamily.</text>
</comment>
<sequence>MSADFLALAVPGVQKLSPYVTGKPIDELARELGIEPARIVKLASNENPLGPNPRVLEAVRGELSELTRYPDGSGFRLKAKLAERFGLKSEQITLGNGSNDIIDLVARCCGAGPNAVFSAHAFAAYPLCTQAAGAESRVVPAVDYGHDLDGMLKAIDEQTAVIFIANPNNPTGNLVRAQALESFLDRVPERVLVVLDEAYIEFYRGTNCQRLNYLVRYPNLLVSRTLSKVYGLAGLRVGYSASSPQIADVLNRVRQPFNVNSLALVAACAGWMTSSIWLKGGGWIAPVWELEQGLAELRLKWIPSRGNFLAVDLGRDAAPINAGLLRDGVIVRPIAGYDCPTFLRVSIGTEQENARFLEALRVVLDQ</sequence>
<accession>Q9RI00</accession>
<protein>
    <recommendedName>
        <fullName evidence="1">Histidinol-phosphate aminotransferase</fullName>
        <ecNumber evidence="1">2.6.1.9</ecNumber>
    </recommendedName>
    <alternativeName>
        <fullName evidence="1">Imidazole acetol-phosphate transaminase</fullName>
    </alternativeName>
</protein>
<name>HIS8_STUST</name>
<feature type="chain" id="PRO_0000153422" description="Histidinol-phosphate aminotransferase">
    <location>
        <begin position="1"/>
        <end position="366"/>
    </location>
</feature>
<feature type="modified residue" description="N6-(pyridoxal phosphate)lysine" evidence="1">
    <location>
        <position position="228"/>
    </location>
</feature>
<dbReference type="EC" id="2.6.1.9" evidence="1"/>
<dbReference type="EMBL" id="AF038578">
    <property type="protein sequence ID" value="AAD47361.1"/>
    <property type="molecule type" value="Genomic_DNA"/>
</dbReference>
<dbReference type="SMR" id="Q9RI00"/>
<dbReference type="UniPathway" id="UPA00031">
    <property type="reaction ID" value="UER00012"/>
</dbReference>
<dbReference type="GO" id="GO:0004400">
    <property type="term" value="F:histidinol-phosphate transaminase activity"/>
    <property type="evidence" value="ECO:0007669"/>
    <property type="project" value="UniProtKB-UniRule"/>
</dbReference>
<dbReference type="GO" id="GO:0030170">
    <property type="term" value="F:pyridoxal phosphate binding"/>
    <property type="evidence" value="ECO:0007669"/>
    <property type="project" value="InterPro"/>
</dbReference>
<dbReference type="GO" id="GO:0000105">
    <property type="term" value="P:L-histidine biosynthetic process"/>
    <property type="evidence" value="ECO:0007669"/>
    <property type="project" value="UniProtKB-UniRule"/>
</dbReference>
<dbReference type="CDD" id="cd00609">
    <property type="entry name" value="AAT_like"/>
    <property type="match status" value="1"/>
</dbReference>
<dbReference type="Gene3D" id="3.90.1150.10">
    <property type="entry name" value="Aspartate Aminotransferase, domain 1"/>
    <property type="match status" value="1"/>
</dbReference>
<dbReference type="Gene3D" id="3.40.640.10">
    <property type="entry name" value="Type I PLP-dependent aspartate aminotransferase-like (Major domain)"/>
    <property type="match status" value="1"/>
</dbReference>
<dbReference type="HAMAP" id="MF_01023">
    <property type="entry name" value="HisC_aminotrans_2"/>
    <property type="match status" value="1"/>
</dbReference>
<dbReference type="InterPro" id="IPR004839">
    <property type="entry name" value="Aminotransferase_I/II_large"/>
</dbReference>
<dbReference type="InterPro" id="IPR005861">
    <property type="entry name" value="HisP_aminotrans"/>
</dbReference>
<dbReference type="InterPro" id="IPR050106">
    <property type="entry name" value="HistidinolP_aminotransfase"/>
</dbReference>
<dbReference type="InterPro" id="IPR015424">
    <property type="entry name" value="PyrdxlP-dep_Trfase"/>
</dbReference>
<dbReference type="InterPro" id="IPR015421">
    <property type="entry name" value="PyrdxlP-dep_Trfase_major"/>
</dbReference>
<dbReference type="InterPro" id="IPR015422">
    <property type="entry name" value="PyrdxlP-dep_Trfase_small"/>
</dbReference>
<dbReference type="NCBIfam" id="TIGR01141">
    <property type="entry name" value="hisC"/>
    <property type="match status" value="1"/>
</dbReference>
<dbReference type="PANTHER" id="PTHR43643:SF3">
    <property type="entry name" value="HISTIDINOL-PHOSPHATE AMINOTRANSFERASE"/>
    <property type="match status" value="1"/>
</dbReference>
<dbReference type="PANTHER" id="PTHR43643">
    <property type="entry name" value="HISTIDINOL-PHOSPHATE AMINOTRANSFERASE 2"/>
    <property type="match status" value="1"/>
</dbReference>
<dbReference type="Pfam" id="PF00155">
    <property type="entry name" value="Aminotran_1_2"/>
    <property type="match status" value="1"/>
</dbReference>
<dbReference type="SUPFAM" id="SSF53383">
    <property type="entry name" value="PLP-dependent transferases"/>
    <property type="match status" value="1"/>
</dbReference>
<reference key="1">
    <citation type="journal article" date="1999" name="J. Mol. Evol.">
        <title>A probable mixed-function supraoperon in Pseudomonas exhibits gene organization features of both intergenomic conservation and gene shuffling.</title>
        <authorList>
            <person name="Xie G."/>
            <person name="Bonner C.A."/>
            <person name="Jensen R.A."/>
        </authorList>
    </citation>
    <scope>NUCLEOTIDE SEQUENCE [GENOMIC DNA]</scope>
    <source>
        <strain>DSM 10701 / IAM 15110 / JCM 21571 / JM300</strain>
    </source>
</reference>
<keyword id="KW-0028">Amino-acid biosynthesis</keyword>
<keyword id="KW-0032">Aminotransferase</keyword>
<keyword id="KW-0368">Histidine biosynthesis</keyword>
<keyword id="KW-0663">Pyridoxal phosphate</keyword>
<keyword id="KW-0808">Transferase</keyword>
<evidence type="ECO:0000255" key="1">
    <source>
        <dbReference type="HAMAP-Rule" id="MF_01023"/>
    </source>
</evidence>
<gene>
    <name evidence="1" type="primary">hisC</name>
    <name type="synonym">hisHB</name>
</gene>
<organism>
    <name type="scientific">Stutzerimonas stutzeri</name>
    <name type="common">Pseudomonas stutzeri</name>
    <dbReference type="NCBI Taxonomy" id="316"/>
    <lineage>
        <taxon>Bacteria</taxon>
        <taxon>Pseudomonadati</taxon>
        <taxon>Pseudomonadota</taxon>
        <taxon>Gammaproteobacteria</taxon>
        <taxon>Pseudomonadales</taxon>
        <taxon>Pseudomonadaceae</taxon>
        <taxon>Stutzerimonas</taxon>
    </lineage>
</organism>
<proteinExistence type="inferred from homology"/>